<proteinExistence type="inferred from homology"/>
<accession>Q9Y783</accession>
<accession>Q7RVD9</accession>
<name>SODM_NEUCR</name>
<comment type="function">
    <text evidence="1">Destroys superoxide anion radicals which are normally produced within the cells and which are toxic to biological systems.</text>
</comment>
<comment type="catalytic activity">
    <reaction evidence="2">
        <text>2 superoxide + 2 H(+) = H2O2 + O2</text>
        <dbReference type="Rhea" id="RHEA:20696"/>
        <dbReference type="ChEBI" id="CHEBI:15378"/>
        <dbReference type="ChEBI" id="CHEBI:15379"/>
        <dbReference type="ChEBI" id="CHEBI:16240"/>
        <dbReference type="ChEBI" id="CHEBI:18421"/>
        <dbReference type="EC" id="1.15.1.1"/>
    </reaction>
</comment>
<comment type="cofactor">
    <cofactor evidence="3">
        <name>Mn(2+)</name>
        <dbReference type="ChEBI" id="CHEBI:29035"/>
    </cofactor>
    <text evidence="3">Binds 1 Mn(2+) ion per subunit.</text>
</comment>
<comment type="subunit">
    <text evidence="1">Homotetramer.</text>
</comment>
<comment type="subcellular location">
    <subcellularLocation>
        <location evidence="3">Mitochondrion matrix</location>
    </subcellularLocation>
</comment>
<comment type="similarity">
    <text evidence="5">Belongs to the iron/manganese superoxide dismutase family.</text>
</comment>
<organism>
    <name type="scientific">Neurospora crassa (strain ATCC 24698 / 74-OR23-1A / CBS 708.71 / DSM 1257 / FGSC 987)</name>
    <dbReference type="NCBI Taxonomy" id="367110"/>
    <lineage>
        <taxon>Eukaryota</taxon>
        <taxon>Fungi</taxon>
        <taxon>Dikarya</taxon>
        <taxon>Ascomycota</taxon>
        <taxon>Pezizomycotina</taxon>
        <taxon>Sordariomycetes</taxon>
        <taxon>Sordariomycetidae</taxon>
        <taxon>Sordariales</taxon>
        <taxon>Sordariaceae</taxon>
        <taxon>Neurospora</taxon>
    </lineage>
</organism>
<protein>
    <recommendedName>
        <fullName>Superoxide dismutase [Mn], mitochondrial</fullName>
        <ecNumber evidence="2">1.15.1.1</ecNumber>
    </recommendedName>
</protein>
<dbReference type="EC" id="1.15.1.1" evidence="2"/>
<dbReference type="EMBL" id="AF118809">
    <property type="protein sequence ID" value="AAD28503.1"/>
    <property type="molecule type" value="Genomic_DNA"/>
</dbReference>
<dbReference type="EMBL" id="AL670011">
    <property type="protein sequence ID" value="CAD21408.1"/>
    <property type="molecule type" value="Genomic_DNA"/>
</dbReference>
<dbReference type="EMBL" id="CM002240">
    <property type="protein sequence ID" value="EAA32343.3"/>
    <property type="molecule type" value="Genomic_DNA"/>
</dbReference>
<dbReference type="RefSeq" id="XP_961579.3">
    <property type="nucleotide sequence ID" value="XM_956486.3"/>
</dbReference>
<dbReference type="SMR" id="Q9Y783"/>
<dbReference type="STRING" id="367110.Q9Y783"/>
<dbReference type="PaxDb" id="5141-EFNCRP00000004418"/>
<dbReference type="EnsemblFungi" id="EAA32343">
    <property type="protein sequence ID" value="EAA32343"/>
    <property type="gene ID" value="NCU01213"/>
</dbReference>
<dbReference type="GeneID" id="3877711"/>
<dbReference type="KEGG" id="ncr:NCU01213"/>
<dbReference type="VEuPathDB" id="FungiDB:NCU01213"/>
<dbReference type="HOGENOM" id="CLU_031625_2_0_1"/>
<dbReference type="InParanoid" id="Q9Y783"/>
<dbReference type="OrthoDB" id="239262at2759"/>
<dbReference type="Proteomes" id="UP000001805">
    <property type="component" value="Chromosome 2, Linkage Group V"/>
</dbReference>
<dbReference type="GO" id="GO:0005759">
    <property type="term" value="C:mitochondrial matrix"/>
    <property type="evidence" value="ECO:0007669"/>
    <property type="project" value="UniProtKB-SubCell"/>
</dbReference>
<dbReference type="GO" id="GO:0005739">
    <property type="term" value="C:mitochondrion"/>
    <property type="evidence" value="ECO:0000318"/>
    <property type="project" value="GO_Central"/>
</dbReference>
<dbReference type="GO" id="GO:0030145">
    <property type="term" value="F:manganese ion binding"/>
    <property type="evidence" value="ECO:0000318"/>
    <property type="project" value="GO_Central"/>
</dbReference>
<dbReference type="GO" id="GO:0004784">
    <property type="term" value="F:superoxide dismutase activity"/>
    <property type="evidence" value="ECO:0000318"/>
    <property type="project" value="GO_Central"/>
</dbReference>
<dbReference type="FunFam" id="1.10.287.990:FF:000001">
    <property type="entry name" value="Superoxide dismutase"/>
    <property type="match status" value="1"/>
</dbReference>
<dbReference type="FunFam" id="3.55.40.20:FF:000004">
    <property type="entry name" value="Superoxide dismutase [Fe]"/>
    <property type="match status" value="1"/>
</dbReference>
<dbReference type="Gene3D" id="1.10.287.990">
    <property type="entry name" value="Fe,Mn superoxide dismutase (SOD) domain"/>
    <property type="match status" value="1"/>
</dbReference>
<dbReference type="Gene3D" id="3.55.40.20">
    <property type="entry name" value="Iron/manganese superoxide dismutase, C-terminal domain"/>
    <property type="match status" value="1"/>
</dbReference>
<dbReference type="InterPro" id="IPR050265">
    <property type="entry name" value="Fe/Mn_Superoxide_Dismutase"/>
</dbReference>
<dbReference type="InterPro" id="IPR001189">
    <property type="entry name" value="Mn/Fe_SOD"/>
</dbReference>
<dbReference type="InterPro" id="IPR019833">
    <property type="entry name" value="Mn/Fe_SOD_BS"/>
</dbReference>
<dbReference type="InterPro" id="IPR019832">
    <property type="entry name" value="Mn/Fe_SOD_C"/>
</dbReference>
<dbReference type="InterPro" id="IPR019831">
    <property type="entry name" value="Mn/Fe_SOD_N"/>
</dbReference>
<dbReference type="InterPro" id="IPR036324">
    <property type="entry name" value="Mn/Fe_SOD_N_sf"/>
</dbReference>
<dbReference type="InterPro" id="IPR036314">
    <property type="entry name" value="SOD_C_sf"/>
</dbReference>
<dbReference type="PANTHER" id="PTHR11404:SF29">
    <property type="entry name" value="SUPEROXIDE DISMUTASE"/>
    <property type="match status" value="1"/>
</dbReference>
<dbReference type="PANTHER" id="PTHR11404">
    <property type="entry name" value="SUPEROXIDE DISMUTASE 2"/>
    <property type="match status" value="1"/>
</dbReference>
<dbReference type="Pfam" id="PF02777">
    <property type="entry name" value="Sod_Fe_C"/>
    <property type="match status" value="1"/>
</dbReference>
<dbReference type="Pfam" id="PF00081">
    <property type="entry name" value="Sod_Fe_N"/>
    <property type="match status" value="1"/>
</dbReference>
<dbReference type="PIRSF" id="PIRSF000349">
    <property type="entry name" value="SODismutase"/>
    <property type="match status" value="1"/>
</dbReference>
<dbReference type="PRINTS" id="PR01703">
    <property type="entry name" value="MNSODISMTASE"/>
</dbReference>
<dbReference type="SUPFAM" id="SSF54719">
    <property type="entry name" value="Fe,Mn superoxide dismutase (SOD), C-terminal domain"/>
    <property type="match status" value="1"/>
</dbReference>
<dbReference type="SUPFAM" id="SSF46609">
    <property type="entry name" value="Fe,Mn superoxide dismutase (SOD), N-terminal domain"/>
    <property type="match status" value="1"/>
</dbReference>
<dbReference type="PROSITE" id="PS00088">
    <property type="entry name" value="SOD_MN"/>
    <property type="match status" value="1"/>
</dbReference>
<evidence type="ECO:0000250" key="1">
    <source>
        <dbReference type="UniProtKB" id="P04179"/>
    </source>
</evidence>
<evidence type="ECO:0000250" key="2">
    <source>
        <dbReference type="UniProtKB" id="P0A0J3"/>
    </source>
</evidence>
<evidence type="ECO:0000250" key="3">
    <source>
        <dbReference type="UniProtKB" id="Q9UQX0"/>
    </source>
</evidence>
<evidence type="ECO:0000255" key="4"/>
<evidence type="ECO:0000305" key="5"/>
<gene>
    <name type="primary">sod-2</name>
    <name type="ORF">18F11.030</name>
    <name type="ORF">NCU01213</name>
</gene>
<keyword id="KW-0049">Antioxidant</keyword>
<keyword id="KW-0464">Manganese</keyword>
<keyword id="KW-0479">Metal-binding</keyword>
<keyword id="KW-0496">Mitochondrion</keyword>
<keyword id="KW-0560">Oxidoreductase</keyword>
<keyword id="KW-1185">Reference proteome</keyword>
<keyword id="KW-0809">Transit peptide</keyword>
<feature type="transit peptide" description="Mitochondrion" evidence="4">
    <location>
        <begin position="1"/>
        <end position="32"/>
    </location>
</feature>
<feature type="chain" id="PRO_0000032885" description="Superoxide dismutase [Mn], mitochondrial">
    <location>
        <begin position="33"/>
        <end position="245"/>
    </location>
</feature>
<feature type="binding site" evidence="1">
    <location>
        <position position="58"/>
    </location>
    <ligand>
        <name>Mn(2+)</name>
        <dbReference type="ChEBI" id="CHEBI:29035"/>
    </ligand>
</feature>
<feature type="binding site" evidence="1">
    <location>
        <position position="106"/>
    </location>
    <ligand>
        <name>Mn(2+)</name>
        <dbReference type="ChEBI" id="CHEBI:29035"/>
    </ligand>
</feature>
<feature type="binding site" evidence="1">
    <location>
        <position position="196"/>
    </location>
    <ligand>
        <name>Mn(2+)</name>
        <dbReference type="ChEBI" id="CHEBI:29035"/>
    </ligand>
</feature>
<feature type="binding site" evidence="1">
    <location>
        <position position="200"/>
    </location>
    <ligand>
        <name>Mn(2+)</name>
        <dbReference type="ChEBI" id="CHEBI:29035"/>
    </ligand>
</feature>
<reference key="1">
    <citation type="submission" date="1999-01" db="EMBL/GenBank/DDBJ databases">
        <title>Characterization of sod-2, the Neurospora crassa gene for manganese superoxide dismutase.</title>
        <authorList>
            <person name="Dvorachek W.H. Jr."/>
            <person name="Natvig D.O."/>
        </authorList>
    </citation>
    <scope>NUCLEOTIDE SEQUENCE [GENOMIC DNA]</scope>
</reference>
<reference key="2">
    <citation type="journal article" date="2003" name="Nucleic Acids Res.">
        <title>What's in the genome of a filamentous fungus? Analysis of the Neurospora genome sequence.</title>
        <authorList>
            <person name="Mannhaupt G."/>
            <person name="Montrone C."/>
            <person name="Haase D."/>
            <person name="Mewes H.-W."/>
            <person name="Aign V."/>
            <person name="Hoheisel J.D."/>
            <person name="Fartmann B."/>
            <person name="Nyakatura G."/>
            <person name="Kempken F."/>
            <person name="Maier J."/>
            <person name="Schulte U."/>
        </authorList>
    </citation>
    <scope>NUCLEOTIDE SEQUENCE [LARGE SCALE GENOMIC DNA]</scope>
    <source>
        <strain>ATCC 24698 / 74-OR23-1A / CBS 708.71 / DSM 1257 / FGSC 987</strain>
    </source>
</reference>
<reference key="3">
    <citation type="journal article" date="2003" name="Nature">
        <title>The genome sequence of the filamentous fungus Neurospora crassa.</title>
        <authorList>
            <person name="Galagan J.E."/>
            <person name="Calvo S.E."/>
            <person name="Borkovich K.A."/>
            <person name="Selker E.U."/>
            <person name="Read N.D."/>
            <person name="Jaffe D.B."/>
            <person name="FitzHugh W."/>
            <person name="Ma L.-J."/>
            <person name="Smirnov S."/>
            <person name="Purcell S."/>
            <person name="Rehman B."/>
            <person name="Elkins T."/>
            <person name="Engels R."/>
            <person name="Wang S."/>
            <person name="Nielsen C.B."/>
            <person name="Butler J."/>
            <person name="Endrizzi M."/>
            <person name="Qui D."/>
            <person name="Ianakiev P."/>
            <person name="Bell-Pedersen D."/>
            <person name="Nelson M.A."/>
            <person name="Werner-Washburne M."/>
            <person name="Selitrennikoff C.P."/>
            <person name="Kinsey J.A."/>
            <person name="Braun E.L."/>
            <person name="Zelter A."/>
            <person name="Schulte U."/>
            <person name="Kothe G.O."/>
            <person name="Jedd G."/>
            <person name="Mewes H.-W."/>
            <person name="Staben C."/>
            <person name="Marcotte E."/>
            <person name="Greenberg D."/>
            <person name="Roy A."/>
            <person name="Foley K."/>
            <person name="Naylor J."/>
            <person name="Stange-Thomann N."/>
            <person name="Barrett R."/>
            <person name="Gnerre S."/>
            <person name="Kamal M."/>
            <person name="Kamvysselis M."/>
            <person name="Mauceli E.W."/>
            <person name="Bielke C."/>
            <person name="Rudd S."/>
            <person name="Frishman D."/>
            <person name="Krystofova S."/>
            <person name="Rasmussen C."/>
            <person name="Metzenberg R.L."/>
            <person name="Perkins D.D."/>
            <person name="Kroken S."/>
            <person name="Cogoni C."/>
            <person name="Macino G."/>
            <person name="Catcheside D.E.A."/>
            <person name="Li W."/>
            <person name="Pratt R.J."/>
            <person name="Osmani S.A."/>
            <person name="DeSouza C.P.C."/>
            <person name="Glass N.L."/>
            <person name="Orbach M.J."/>
            <person name="Berglund J.A."/>
            <person name="Voelker R."/>
            <person name="Yarden O."/>
            <person name="Plamann M."/>
            <person name="Seiler S."/>
            <person name="Dunlap J.C."/>
            <person name="Radford A."/>
            <person name="Aramayo R."/>
            <person name="Natvig D.O."/>
            <person name="Alex L.A."/>
            <person name="Mannhaupt G."/>
            <person name="Ebbole D.J."/>
            <person name="Freitag M."/>
            <person name="Paulsen I."/>
            <person name="Sachs M.S."/>
            <person name="Lander E.S."/>
            <person name="Nusbaum C."/>
            <person name="Birren B.W."/>
        </authorList>
    </citation>
    <scope>NUCLEOTIDE SEQUENCE [LARGE SCALE GENOMIC DNA]</scope>
    <source>
        <strain>ATCC 24698 / 74-OR23-1A / CBS 708.71 / DSM 1257 / FGSC 987</strain>
    </source>
</reference>
<sequence>MVNLGSIWQNLLASQAPLQSMTGNATTMAGLATYSLPQLPYAYNALEPYISAQIMELHHSKHHQTYVTNLNNALKVHVAAIASSDIPAQIAQQPAIKFNGGGHINHSLFWKNLAPAETPETNYSKAAPSLAAEIEKTWGSFDEFKKAFSAALLGIQGSGWGWLVKESTAEKGRLRIITTKDQDPVVGGEVPVFGVDMWEHAYYLQYLNGKAAYVENIWKVINWKTAEERFQGSREDAFADLKALL</sequence>